<name>RL22_TRIEI</name>
<proteinExistence type="inferred from homology"/>
<feature type="chain" id="PRO_0000354531" description="Large ribosomal subunit protein uL22">
    <location>
        <begin position="1"/>
        <end position="119"/>
    </location>
</feature>
<dbReference type="EMBL" id="CP000393">
    <property type="protein sequence ID" value="ABG52162.1"/>
    <property type="molecule type" value="Genomic_DNA"/>
</dbReference>
<dbReference type="RefSeq" id="WP_011612517.1">
    <property type="nucleotide sequence ID" value="NC_008312.1"/>
</dbReference>
<dbReference type="SMR" id="Q110B2"/>
<dbReference type="STRING" id="203124.Tery_3007"/>
<dbReference type="KEGG" id="ter:Tery_3007"/>
<dbReference type="eggNOG" id="COG0091">
    <property type="taxonomic scope" value="Bacteria"/>
</dbReference>
<dbReference type="HOGENOM" id="CLU_083987_3_2_3"/>
<dbReference type="OrthoDB" id="9805969at2"/>
<dbReference type="GO" id="GO:0022625">
    <property type="term" value="C:cytosolic large ribosomal subunit"/>
    <property type="evidence" value="ECO:0007669"/>
    <property type="project" value="TreeGrafter"/>
</dbReference>
<dbReference type="GO" id="GO:0019843">
    <property type="term" value="F:rRNA binding"/>
    <property type="evidence" value="ECO:0007669"/>
    <property type="project" value="UniProtKB-UniRule"/>
</dbReference>
<dbReference type="GO" id="GO:0003735">
    <property type="term" value="F:structural constituent of ribosome"/>
    <property type="evidence" value="ECO:0007669"/>
    <property type="project" value="InterPro"/>
</dbReference>
<dbReference type="GO" id="GO:0006412">
    <property type="term" value="P:translation"/>
    <property type="evidence" value="ECO:0007669"/>
    <property type="project" value="UniProtKB-UniRule"/>
</dbReference>
<dbReference type="CDD" id="cd00336">
    <property type="entry name" value="Ribosomal_L22"/>
    <property type="match status" value="1"/>
</dbReference>
<dbReference type="Gene3D" id="3.90.470.10">
    <property type="entry name" value="Ribosomal protein L22/L17"/>
    <property type="match status" value="1"/>
</dbReference>
<dbReference type="HAMAP" id="MF_01331_B">
    <property type="entry name" value="Ribosomal_uL22_B"/>
    <property type="match status" value="1"/>
</dbReference>
<dbReference type="InterPro" id="IPR001063">
    <property type="entry name" value="Ribosomal_uL22"/>
</dbReference>
<dbReference type="InterPro" id="IPR005727">
    <property type="entry name" value="Ribosomal_uL22_bac/chlpt-type"/>
</dbReference>
<dbReference type="InterPro" id="IPR047867">
    <property type="entry name" value="Ribosomal_uL22_bac/org-type"/>
</dbReference>
<dbReference type="InterPro" id="IPR036394">
    <property type="entry name" value="Ribosomal_uL22_sf"/>
</dbReference>
<dbReference type="NCBIfam" id="TIGR01044">
    <property type="entry name" value="rplV_bact"/>
    <property type="match status" value="1"/>
</dbReference>
<dbReference type="PANTHER" id="PTHR13501">
    <property type="entry name" value="CHLOROPLAST 50S RIBOSOMAL PROTEIN L22-RELATED"/>
    <property type="match status" value="1"/>
</dbReference>
<dbReference type="PANTHER" id="PTHR13501:SF8">
    <property type="entry name" value="LARGE RIBOSOMAL SUBUNIT PROTEIN UL22M"/>
    <property type="match status" value="1"/>
</dbReference>
<dbReference type="Pfam" id="PF00237">
    <property type="entry name" value="Ribosomal_L22"/>
    <property type="match status" value="1"/>
</dbReference>
<dbReference type="SUPFAM" id="SSF54843">
    <property type="entry name" value="Ribosomal protein L22"/>
    <property type="match status" value="1"/>
</dbReference>
<sequence length="119" mass="13434">MPIDTNTEVKAIARYIRMSPFKVRRVLDQIRGISYREALIILEFMPYRSCVPIRKVLCSAVANAENNKGIDPDTLVISKAFADQGPCLPRYRPRAQGRAYKIRKPTCHITVAVASLVDD</sequence>
<accession>Q110B2</accession>
<evidence type="ECO:0000255" key="1">
    <source>
        <dbReference type="HAMAP-Rule" id="MF_01331"/>
    </source>
</evidence>
<evidence type="ECO:0000305" key="2"/>
<protein>
    <recommendedName>
        <fullName evidence="1">Large ribosomal subunit protein uL22</fullName>
    </recommendedName>
    <alternativeName>
        <fullName evidence="2">50S ribosomal protein L22</fullName>
    </alternativeName>
</protein>
<comment type="function">
    <text evidence="1">This protein binds specifically to 23S rRNA; its binding is stimulated by other ribosomal proteins, e.g. L4, L17, and L20. It is important during the early stages of 50S assembly. It makes multiple contacts with different domains of the 23S rRNA in the assembled 50S subunit and ribosome (By similarity).</text>
</comment>
<comment type="function">
    <text evidence="1">The globular domain of the protein is located near the polypeptide exit tunnel on the outside of the subunit, while an extended beta-hairpin is found that lines the wall of the exit tunnel in the center of the 70S ribosome.</text>
</comment>
<comment type="subunit">
    <text evidence="1">Part of the 50S ribosomal subunit.</text>
</comment>
<comment type="similarity">
    <text evidence="1">Belongs to the universal ribosomal protein uL22 family.</text>
</comment>
<reference key="1">
    <citation type="journal article" date="2015" name="Proc. Natl. Acad. Sci. U.S.A.">
        <title>Trichodesmium genome maintains abundant, widespread noncoding DNA in situ, despite oligotrophic lifestyle.</title>
        <authorList>
            <person name="Walworth N."/>
            <person name="Pfreundt U."/>
            <person name="Nelson W.C."/>
            <person name="Mincer T."/>
            <person name="Heidelberg J.F."/>
            <person name="Fu F."/>
            <person name="Waterbury J.B."/>
            <person name="Glavina del Rio T."/>
            <person name="Goodwin L."/>
            <person name="Kyrpides N.C."/>
            <person name="Land M.L."/>
            <person name="Woyke T."/>
            <person name="Hutchins D.A."/>
            <person name="Hess W.R."/>
            <person name="Webb E.A."/>
        </authorList>
    </citation>
    <scope>NUCLEOTIDE SEQUENCE [LARGE SCALE GENOMIC DNA]</scope>
    <source>
        <strain>IMS101</strain>
    </source>
</reference>
<gene>
    <name evidence="1" type="primary">rplV</name>
    <name evidence="1" type="synonym">rpl22</name>
    <name type="ordered locus">Tery_3007</name>
</gene>
<keyword id="KW-0687">Ribonucleoprotein</keyword>
<keyword id="KW-0689">Ribosomal protein</keyword>
<keyword id="KW-0694">RNA-binding</keyword>
<keyword id="KW-0699">rRNA-binding</keyword>
<organism>
    <name type="scientific">Trichodesmium erythraeum (strain IMS101)</name>
    <dbReference type="NCBI Taxonomy" id="203124"/>
    <lineage>
        <taxon>Bacteria</taxon>
        <taxon>Bacillati</taxon>
        <taxon>Cyanobacteriota</taxon>
        <taxon>Cyanophyceae</taxon>
        <taxon>Oscillatoriophycideae</taxon>
        <taxon>Oscillatoriales</taxon>
        <taxon>Microcoleaceae</taxon>
        <taxon>Trichodesmium</taxon>
    </lineage>
</organism>